<protein>
    <recommendedName>
        <fullName evidence="1">Histidine biosynthesis bifunctional protein HisIE</fullName>
    </recommendedName>
    <domain>
        <recommendedName>
            <fullName evidence="1">Phosphoribosyl-AMP cyclohydrolase</fullName>
            <shortName evidence="1">PRA-CH</shortName>
            <ecNumber evidence="1">3.5.4.19</ecNumber>
        </recommendedName>
    </domain>
    <domain>
        <recommendedName>
            <fullName evidence="1">Phosphoribosyl-ATP pyrophosphatase</fullName>
            <shortName evidence="1">PRA-PH</shortName>
            <ecNumber evidence="1">3.6.1.31</ecNumber>
        </recommendedName>
    </domain>
</protein>
<evidence type="ECO:0000255" key="1">
    <source>
        <dbReference type="HAMAP-Rule" id="MF_01019"/>
    </source>
</evidence>
<comment type="catalytic activity">
    <reaction evidence="1">
        <text>1-(5-phospho-beta-D-ribosyl)-ATP + H2O = 1-(5-phospho-beta-D-ribosyl)-5'-AMP + diphosphate + H(+)</text>
        <dbReference type="Rhea" id="RHEA:22828"/>
        <dbReference type="ChEBI" id="CHEBI:15377"/>
        <dbReference type="ChEBI" id="CHEBI:15378"/>
        <dbReference type="ChEBI" id="CHEBI:33019"/>
        <dbReference type="ChEBI" id="CHEBI:59457"/>
        <dbReference type="ChEBI" id="CHEBI:73183"/>
        <dbReference type="EC" id="3.6.1.31"/>
    </reaction>
</comment>
<comment type="catalytic activity">
    <reaction evidence="1">
        <text>1-(5-phospho-beta-D-ribosyl)-5'-AMP + H2O = 1-(5-phospho-beta-D-ribosyl)-5-[(5-phospho-beta-D-ribosylamino)methylideneamino]imidazole-4-carboxamide</text>
        <dbReference type="Rhea" id="RHEA:20049"/>
        <dbReference type="ChEBI" id="CHEBI:15377"/>
        <dbReference type="ChEBI" id="CHEBI:58435"/>
        <dbReference type="ChEBI" id="CHEBI:59457"/>
        <dbReference type="EC" id="3.5.4.19"/>
    </reaction>
</comment>
<comment type="pathway">
    <text evidence="1">Amino-acid biosynthesis; L-histidine biosynthesis; L-histidine from 5-phospho-alpha-D-ribose 1-diphosphate: step 2/9.</text>
</comment>
<comment type="pathway">
    <text evidence="1">Amino-acid biosynthesis; L-histidine biosynthesis; L-histidine from 5-phospho-alpha-D-ribose 1-diphosphate: step 3/9.</text>
</comment>
<comment type="subcellular location">
    <subcellularLocation>
        <location evidence="1">Cytoplasm</location>
    </subcellularLocation>
</comment>
<comment type="similarity">
    <text evidence="1">In the N-terminal section; belongs to the PRA-CH family.</text>
</comment>
<comment type="similarity">
    <text evidence="1">In the C-terminal section; belongs to the PRA-PH family.</text>
</comment>
<gene>
    <name evidence="1" type="primary">hisI</name>
    <name evidence="1" type="synonym">hisIE</name>
    <name type="ordered locus">PMT_0453</name>
</gene>
<name>HIS2_PROMM</name>
<proteinExistence type="inferred from homology"/>
<keyword id="KW-0028">Amino-acid biosynthesis</keyword>
<keyword id="KW-0067">ATP-binding</keyword>
<keyword id="KW-0963">Cytoplasm</keyword>
<keyword id="KW-0368">Histidine biosynthesis</keyword>
<keyword id="KW-0378">Hydrolase</keyword>
<keyword id="KW-0511">Multifunctional enzyme</keyword>
<keyword id="KW-0547">Nucleotide-binding</keyword>
<keyword id="KW-1185">Reference proteome</keyword>
<reference key="1">
    <citation type="journal article" date="2003" name="Nature">
        <title>Genome divergence in two Prochlorococcus ecotypes reflects oceanic niche differentiation.</title>
        <authorList>
            <person name="Rocap G."/>
            <person name="Larimer F.W."/>
            <person name="Lamerdin J.E."/>
            <person name="Malfatti S."/>
            <person name="Chain P."/>
            <person name="Ahlgren N.A."/>
            <person name="Arellano A."/>
            <person name="Coleman M."/>
            <person name="Hauser L."/>
            <person name="Hess W.R."/>
            <person name="Johnson Z.I."/>
            <person name="Land M.L."/>
            <person name="Lindell D."/>
            <person name="Post A.F."/>
            <person name="Regala W."/>
            <person name="Shah M."/>
            <person name="Shaw S.L."/>
            <person name="Steglich C."/>
            <person name="Sullivan M.B."/>
            <person name="Ting C.S."/>
            <person name="Tolonen A."/>
            <person name="Webb E.A."/>
            <person name="Zinser E.R."/>
            <person name="Chisholm S.W."/>
        </authorList>
    </citation>
    <scope>NUCLEOTIDE SEQUENCE [LARGE SCALE GENOMIC DNA]</scope>
    <source>
        <strain>MIT 9313</strain>
    </source>
</reference>
<feature type="chain" id="PRO_0000136424" description="Histidine biosynthesis bifunctional protein HisIE">
    <location>
        <begin position="1"/>
        <end position="222"/>
    </location>
</feature>
<feature type="region of interest" description="Phosphoribosyl-AMP cyclohydrolase">
    <location>
        <begin position="1"/>
        <end position="128"/>
    </location>
</feature>
<feature type="region of interest" description="Phosphoribosyl-ATP pyrophosphohydrolase">
    <location>
        <begin position="129"/>
        <end position="222"/>
    </location>
</feature>
<accession>Q7TV28</accession>
<sequence length="222" mass="24827">MQPLSPAFIDQLCFDDIGLIPAISQDWLDGAVLMMAWMNRTALEQTLKSGQVHYWSRSRQELWHKGATSGHTQILKGIRYDCDADVLLLSIEQTGLVSCHTGARSCFFAEVNQHSQGDSLTLPPPMDACSELFRVIDQRHTTPEANSYTNKLLEGGDNRILKKIGEESAEFVMACKDDDEKAIANEAADLLFHLQVALAHHGVNWRDVLEVLANRRGAPRRN</sequence>
<organism>
    <name type="scientific">Prochlorococcus marinus (strain MIT 9313)</name>
    <dbReference type="NCBI Taxonomy" id="74547"/>
    <lineage>
        <taxon>Bacteria</taxon>
        <taxon>Bacillati</taxon>
        <taxon>Cyanobacteriota</taxon>
        <taxon>Cyanophyceae</taxon>
        <taxon>Synechococcales</taxon>
        <taxon>Prochlorococcaceae</taxon>
        <taxon>Prochlorococcus</taxon>
    </lineage>
</organism>
<dbReference type="EC" id="3.5.4.19" evidence="1"/>
<dbReference type="EC" id="3.6.1.31" evidence="1"/>
<dbReference type="EMBL" id="BX548175">
    <property type="protein sequence ID" value="CAE20628.1"/>
    <property type="molecule type" value="Genomic_DNA"/>
</dbReference>
<dbReference type="RefSeq" id="WP_011129832.1">
    <property type="nucleotide sequence ID" value="NC_005071.1"/>
</dbReference>
<dbReference type="SMR" id="Q7TV28"/>
<dbReference type="KEGG" id="pmt:PMT_0453"/>
<dbReference type="eggNOG" id="COG0139">
    <property type="taxonomic scope" value="Bacteria"/>
</dbReference>
<dbReference type="eggNOG" id="COG0140">
    <property type="taxonomic scope" value="Bacteria"/>
</dbReference>
<dbReference type="HOGENOM" id="CLU_048577_3_1_3"/>
<dbReference type="OrthoDB" id="9795769at2"/>
<dbReference type="UniPathway" id="UPA00031">
    <property type="reaction ID" value="UER00007"/>
</dbReference>
<dbReference type="UniPathway" id="UPA00031">
    <property type="reaction ID" value="UER00008"/>
</dbReference>
<dbReference type="Proteomes" id="UP000001423">
    <property type="component" value="Chromosome"/>
</dbReference>
<dbReference type="GO" id="GO:0005737">
    <property type="term" value="C:cytoplasm"/>
    <property type="evidence" value="ECO:0007669"/>
    <property type="project" value="UniProtKB-SubCell"/>
</dbReference>
<dbReference type="GO" id="GO:0005524">
    <property type="term" value="F:ATP binding"/>
    <property type="evidence" value="ECO:0007669"/>
    <property type="project" value="UniProtKB-KW"/>
</dbReference>
<dbReference type="GO" id="GO:0004635">
    <property type="term" value="F:phosphoribosyl-AMP cyclohydrolase activity"/>
    <property type="evidence" value="ECO:0007669"/>
    <property type="project" value="UniProtKB-UniRule"/>
</dbReference>
<dbReference type="GO" id="GO:0004636">
    <property type="term" value="F:phosphoribosyl-ATP diphosphatase activity"/>
    <property type="evidence" value="ECO:0007669"/>
    <property type="project" value="UniProtKB-UniRule"/>
</dbReference>
<dbReference type="GO" id="GO:0000105">
    <property type="term" value="P:L-histidine biosynthetic process"/>
    <property type="evidence" value="ECO:0007669"/>
    <property type="project" value="UniProtKB-UniRule"/>
</dbReference>
<dbReference type="CDD" id="cd11534">
    <property type="entry name" value="NTP-PPase_HisIE_like"/>
    <property type="match status" value="1"/>
</dbReference>
<dbReference type="FunFam" id="3.10.20.810:FF:000001">
    <property type="entry name" value="Histidine biosynthesis bifunctional protein HisIE"/>
    <property type="match status" value="1"/>
</dbReference>
<dbReference type="Gene3D" id="1.10.287.1080">
    <property type="entry name" value="MazG-like"/>
    <property type="match status" value="1"/>
</dbReference>
<dbReference type="Gene3D" id="3.10.20.810">
    <property type="entry name" value="Phosphoribosyl-AMP cyclohydrolase"/>
    <property type="match status" value="1"/>
</dbReference>
<dbReference type="HAMAP" id="MF_01020">
    <property type="entry name" value="HisE"/>
    <property type="match status" value="1"/>
</dbReference>
<dbReference type="HAMAP" id="MF_01021">
    <property type="entry name" value="HisI"/>
    <property type="match status" value="1"/>
</dbReference>
<dbReference type="HAMAP" id="MF_01019">
    <property type="entry name" value="HisIE"/>
    <property type="match status" value="1"/>
</dbReference>
<dbReference type="InterPro" id="IPR023019">
    <property type="entry name" value="His_synth_HisIE"/>
</dbReference>
<dbReference type="InterPro" id="IPR008179">
    <property type="entry name" value="HisE"/>
</dbReference>
<dbReference type="InterPro" id="IPR026660">
    <property type="entry name" value="PRA-CH"/>
</dbReference>
<dbReference type="InterPro" id="IPR021130">
    <property type="entry name" value="PRib-ATP_PPHydrolase-like"/>
</dbReference>
<dbReference type="InterPro" id="IPR002496">
    <property type="entry name" value="PRib_AMP_CycHydrolase_dom"/>
</dbReference>
<dbReference type="InterPro" id="IPR038019">
    <property type="entry name" value="PRib_AMP_CycHydrolase_sf"/>
</dbReference>
<dbReference type="NCBIfam" id="TIGR03188">
    <property type="entry name" value="histidine_hisI"/>
    <property type="match status" value="1"/>
</dbReference>
<dbReference type="NCBIfam" id="NF000768">
    <property type="entry name" value="PRK00051.1"/>
    <property type="match status" value="1"/>
</dbReference>
<dbReference type="NCBIfam" id="NF002747">
    <property type="entry name" value="PRK02759.1"/>
    <property type="match status" value="1"/>
</dbReference>
<dbReference type="PANTHER" id="PTHR42945">
    <property type="entry name" value="HISTIDINE BIOSYNTHESIS BIFUNCTIONAL PROTEIN"/>
    <property type="match status" value="1"/>
</dbReference>
<dbReference type="PANTHER" id="PTHR42945:SF1">
    <property type="entry name" value="HISTIDINE BIOSYNTHESIS BIFUNCTIONAL PROTEIN HIS7"/>
    <property type="match status" value="1"/>
</dbReference>
<dbReference type="Pfam" id="PF01502">
    <property type="entry name" value="PRA-CH"/>
    <property type="match status" value="1"/>
</dbReference>
<dbReference type="Pfam" id="PF01503">
    <property type="entry name" value="PRA-PH"/>
    <property type="match status" value="1"/>
</dbReference>
<dbReference type="SUPFAM" id="SSF101386">
    <property type="entry name" value="all-alpha NTP pyrophosphatases"/>
    <property type="match status" value="1"/>
</dbReference>
<dbReference type="SUPFAM" id="SSF141734">
    <property type="entry name" value="HisI-like"/>
    <property type="match status" value="1"/>
</dbReference>